<comment type="function">
    <text evidence="1">This is a receptor for bradykinin. Could be a factor in chronic pain and inflammation.</text>
</comment>
<comment type="subcellular location">
    <subcellularLocation>
        <location evidence="1">Cell membrane</location>
        <topology evidence="2">Multi-pass membrane protein</topology>
    </subcellularLocation>
</comment>
<comment type="tissue specificity">
    <text>Expressed in bladder, lung, duodenum, kidney, uterus, thymus, salivary gland, testis, prostate, macrophages, aorta, spleen and heart.</text>
</comment>
<comment type="induction">
    <text evidence="4 5">By lipopolysaccharide (LPS), four hours after treatment levels show an increase in many tissues. After 12 hours maximum levels are observed in the heart.</text>
</comment>
<comment type="similarity">
    <text evidence="3">Belongs to the G-protein coupled receptor 1 family. Bradykinin receptor subfamily. BDKRB1 sub-subfamily.</text>
</comment>
<protein>
    <recommendedName>
        <fullName>B1 bradykinin receptor</fullName>
        <shortName>B1R</shortName>
        <shortName>BK-1 receptor</shortName>
    </recommendedName>
    <alternativeName>
        <fullName>Kinin B1 receptor</fullName>
        <shortName>KB1</shortName>
    </alternativeName>
</protein>
<sequence>MASEVLLELQPSNRSLQAPANITSCESALEDWDLLYRVLPGFVITICFFGLLGNLLVLSFFLLPWRQWWWQQRQRQQRLTIAEIYLANLAASDLVFVLGLPFWAENIGNRFNWPFGTDLCRVVSGVIKANLFVSIFLVVAISQDRYRLLVYPMTSWGYRRRRQAQATCLLIWVAGGLLSIPTFLLRSVKVVPDLNVSACILLFPHEAWHFARMVELNVLGFLLPVTAIIFFNYHILASLRGQKEASRTRCGGPKGSKTTGLILTLVASFLVCWCPYHFFAFLDFLVQVRVIQDCSWKEITDLGLQLANFFAFVNSCLNPLIYVFAGRLLKTRVLGTL</sequence>
<gene>
    <name type="primary">Bdkrb1</name>
    <name type="synonym">B1bkr</name>
    <name type="synonym">Bkr</name>
</gene>
<evidence type="ECO:0000250" key="1">
    <source>
        <dbReference type="UniProtKB" id="P46663"/>
    </source>
</evidence>
<evidence type="ECO:0000255" key="2"/>
<evidence type="ECO:0000255" key="3">
    <source>
        <dbReference type="PROSITE-ProRule" id="PRU00521"/>
    </source>
</evidence>
<evidence type="ECO:0000269" key="4">
    <source>
    </source>
</evidence>
<evidence type="ECO:0000269" key="5">
    <source>
    </source>
</evidence>
<feature type="chain" id="PRO_0000069187" description="B1 bradykinin receptor">
    <location>
        <begin position="1"/>
        <end position="337"/>
    </location>
</feature>
<feature type="topological domain" description="Extracellular" evidence="2">
    <location>
        <begin position="1"/>
        <end position="41"/>
    </location>
</feature>
<feature type="transmembrane region" description="Helical; Name=1" evidence="2">
    <location>
        <begin position="42"/>
        <end position="62"/>
    </location>
</feature>
<feature type="topological domain" description="Cytoplasmic" evidence="2">
    <location>
        <begin position="63"/>
        <end position="83"/>
    </location>
</feature>
<feature type="transmembrane region" description="Helical; Name=2" evidence="2">
    <location>
        <begin position="84"/>
        <end position="104"/>
    </location>
</feature>
<feature type="topological domain" description="Extracellular" evidence="2">
    <location>
        <begin position="105"/>
        <end position="121"/>
    </location>
</feature>
<feature type="transmembrane region" description="Helical; Name=3" evidence="2">
    <location>
        <begin position="122"/>
        <end position="142"/>
    </location>
</feature>
<feature type="topological domain" description="Cytoplasmic" evidence="2">
    <location>
        <begin position="143"/>
        <end position="164"/>
    </location>
</feature>
<feature type="transmembrane region" description="Helical; Name=4" evidence="2">
    <location>
        <begin position="165"/>
        <end position="185"/>
    </location>
</feature>
<feature type="topological domain" description="Extracellular" evidence="2">
    <location>
        <begin position="186"/>
        <end position="217"/>
    </location>
</feature>
<feature type="transmembrane region" description="Helical; Name=5" evidence="2">
    <location>
        <begin position="218"/>
        <end position="238"/>
    </location>
</feature>
<feature type="topological domain" description="Cytoplasmic" evidence="2">
    <location>
        <begin position="239"/>
        <end position="261"/>
    </location>
</feature>
<feature type="transmembrane region" description="Helical; Name=6" evidence="2">
    <location>
        <begin position="262"/>
        <end position="282"/>
    </location>
</feature>
<feature type="topological domain" description="Extracellular" evidence="2">
    <location>
        <begin position="283"/>
        <end position="305"/>
    </location>
</feature>
<feature type="transmembrane region" description="Helical; Name=7" evidence="2">
    <location>
        <begin position="306"/>
        <end position="326"/>
    </location>
</feature>
<feature type="topological domain" description="Cytoplasmic" evidence="2">
    <location>
        <begin position="327"/>
        <end position="337"/>
    </location>
</feature>
<feature type="glycosylation site" description="N-linked (GlcNAc...) asparagine" evidence="2">
    <location>
        <position position="13"/>
    </location>
</feature>
<feature type="glycosylation site" description="N-linked (GlcNAc...) asparagine" evidence="2">
    <location>
        <position position="21"/>
    </location>
</feature>
<feature type="glycosylation site" description="N-linked (GlcNAc...) asparagine" evidence="2">
    <location>
        <position position="195"/>
    </location>
</feature>
<feature type="disulfide bond" evidence="3">
    <location>
        <begin position="120"/>
        <end position="199"/>
    </location>
</feature>
<dbReference type="EMBL" id="U66107">
    <property type="protein sequence ID" value="AAC78505.2"/>
    <property type="molecule type" value="mRNA"/>
</dbReference>
<dbReference type="EMBL" id="AJ132230">
    <property type="protein sequence ID" value="CAA10610.1"/>
    <property type="molecule type" value="mRNA"/>
</dbReference>
<dbReference type="EMBL" id="AF009899">
    <property type="protein sequence ID" value="AAB63592.1"/>
    <property type="molecule type" value="Genomic_DNA"/>
</dbReference>
<dbReference type="EMBL" id="AF114406">
    <property type="protein sequence ID" value="AAD29286.1"/>
    <property type="molecule type" value="Genomic_DNA"/>
</dbReference>
<dbReference type="RefSeq" id="NP_110478.1">
    <property type="nucleotide sequence ID" value="NM_030851.1"/>
</dbReference>
<dbReference type="RefSeq" id="XP_008763083.1">
    <property type="nucleotide sequence ID" value="XM_008764861.4"/>
</dbReference>
<dbReference type="SMR" id="P97583"/>
<dbReference type="FunCoup" id="P97583">
    <property type="interactions" value="185"/>
</dbReference>
<dbReference type="STRING" id="10116.ENSRNOP00000005953"/>
<dbReference type="BindingDB" id="P97583"/>
<dbReference type="ChEMBL" id="CHEMBL4613"/>
<dbReference type="DrugCentral" id="P97583"/>
<dbReference type="GuidetoPHARMACOLOGY" id="41"/>
<dbReference type="GlyCosmos" id="P97583">
    <property type="glycosylation" value="3 sites, No reported glycans"/>
</dbReference>
<dbReference type="GlyGen" id="P97583">
    <property type="glycosylation" value="3 sites"/>
</dbReference>
<dbReference type="PhosphoSitePlus" id="P97583"/>
<dbReference type="PaxDb" id="10116-ENSRNOP00000005953"/>
<dbReference type="Ensembl" id="ENSRNOT00000005953.4">
    <property type="protein sequence ID" value="ENSRNOP00000005953.2"/>
    <property type="gene ID" value="ENSRNOG00000004488.4"/>
</dbReference>
<dbReference type="GeneID" id="81509"/>
<dbReference type="KEGG" id="rno:81509"/>
<dbReference type="UCSC" id="RGD:620401">
    <property type="organism name" value="rat"/>
</dbReference>
<dbReference type="AGR" id="RGD:620401"/>
<dbReference type="CTD" id="623"/>
<dbReference type="RGD" id="620401">
    <property type="gene designation" value="Bdkrb1"/>
</dbReference>
<dbReference type="eggNOG" id="KOG3656">
    <property type="taxonomic scope" value="Eukaryota"/>
</dbReference>
<dbReference type="GeneTree" id="ENSGT01130000278308"/>
<dbReference type="HOGENOM" id="CLU_009579_8_3_1"/>
<dbReference type="InParanoid" id="P97583"/>
<dbReference type="OMA" id="GCFWEEL"/>
<dbReference type="OrthoDB" id="6076970at2759"/>
<dbReference type="PhylomeDB" id="P97583"/>
<dbReference type="TreeFam" id="TF330024"/>
<dbReference type="Reactome" id="R-RNO-375276">
    <property type="pathway name" value="Peptide ligand-binding receptors"/>
</dbReference>
<dbReference type="Reactome" id="R-RNO-416476">
    <property type="pathway name" value="G alpha (q) signalling events"/>
</dbReference>
<dbReference type="Reactome" id="R-RNO-418594">
    <property type="pathway name" value="G alpha (i) signalling events"/>
</dbReference>
<dbReference type="PRO" id="PR:P97583"/>
<dbReference type="Proteomes" id="UP000002494">
    <property type="component" value="Chromosome 6"/>
</dbReference>
<dbReference type="Bgee" id="ENSRNOG00000004488">
    <property type="expression patterns" value="Expressed in stomach and 4 other cell types or tissues"/>
</dbReference>
<dbReference type="GO" id="GO:0005886">
    <property type="term" value="C:plasma membrane"/>
    <property type="evidence" value="ECO:0000318"/>
    <property type="project" value="GO_Central"/>
</dbReference>
<dbReference type="GO" id="GO:0004947">
    <property type="term" value="F:bradykinin receptor activity"/>
    <property type="evidence" value="ECO:0000314"/>
    <property type="project" value="RGD"/>
</dbReference>
<dbReference type="GO" id="GO:0042277">
    <property type="term" value="F:peptide binding"/>
    <property type="evidence" value="ECO:0000353"/>
    <property type="project" value="RGD"/>
</dbReference>
<dbReference type="GO" id="GO:0016477">
    <property type="term" value="P:cell migration"/>
    <property type="evidence" value="ECO:0000315"/>
    <property type="project" value="RGD"/>
</dbReference>
<dbReference type="GO" id="GO:0019371">
    <property type="term" value="P:cyclooxygenase pathway"/>
    <property type="evidence" value="ECO:0000266"/>
    <property type="project" value="RGD"/>
</dbReference>
<dbReference type="GO" id="GO:0007186">
    <property type="term" value="P:G protein-coupled receptor signaling pathway"/>
    <property type="evidence" value="ECO:0000318"/>
    <property type="project" value="GO_Central"/>
</dbReference>
<dbReference type="GO" id="GO:0006954">
    <property type="term" value="P:inflammatory response"/>
    <property type="evidence" value="ECO:0007669"/>
    <property type="project" value="InterPro"/>
</dbReference>
<dbReference type="GO" id="GO:0045776">
    <property type="term" value="P:negative regulation of blood pressure"/>
    <property type="evidence" value="ECO:0000315"/>
    <property type="project" value="RGD"/>
</dbReference>
<dbReference type="GO" id="GO:0030308">
    <property type="term" value="P:negative regulation of cell growth"/>
    <property type="evidence" value="ECO:0000315"/>
    <property type="project" value="RGD"/>
</dbReference>
<dbReference type="GO" id="GO:0002687">
    <property type="term" value="P:positive regulation of leukocyte migration"/>
    <property type="evidence" value="ECO:0000315"/>
    <property type="project" value="RGD"/>
</dbReference>
<dbReference type="GO" id="GO:0051281">
    <property type="term" value="P:positive regulation of release of sequestered calcium ion into cytosol"/>
    <property type="evidence" value="ECO:0000314"/>
    <property type="project" value="RGD"/>
</dbReference>
<dbReference type="GO" id="GO:0032496">
    <property type="term" value="P:response to lipopolysaccharide"/>
    <property type="evidence" value="ECO:0000270"/>
    <property type="project" value="RGD"/>
</dbReference>
<dbReference type="GO" id="GO:0009612">
    <property type="term" value="P:response to mechanical stimulus"/>
    <property type="evidence" value="ECO:0007669"/>
    <property type="project" value="InterPro"/>
</dbReference>
<dbReference type="GO" id="GO:0060085">
    <property type="term" value="P:smooth muscle relaxation of the bladder outlet"/>
    <property type="evidence" value="ECO:0000266"/>
    <property type="project" value="RGD"/>
</dbReference>
<dbReference type="CDD" id="cd15380">
    <property type="entry name" value="7tmA_BK-1"/>
    <property type="match status" value="1"/>
</dbReference>
<dbReference type="FunFam" id="1.20.1070.10:FF:000295">
    <property type="entry name" value="B1 bradykinin receptor"/>
    <property type="match status" value="1"/>
</dbReference>
<dbReference type="Gene3D" id="1.20.1070.10">
    <property type="entry name" value="Rhodopsin 7-helix transmembrane proteins"/>
    <property type="match status" value="1"/>
</dbReference>
<dbReference type="InterPro" id="IPR001186">
    <property type="entry name" value="Brdyknn_1_rcpt"/>
</dbReference>
<dbReference type="InterPro" id="IPR000496">
    <property type="entry name" value="Brdyknn_rcpt"/>
</dbReference>
<dbReference type="InterPro" id="IPR050119">
    <property type="entry name" value="CCR1-9-like"/>
</dbReference>
<dbReference type="InterPro" id="IPR000276">
    <property type="entry name" value="GPCR_Rhodpsn"/>
</dbReference>
<dbReference type="InterPro" id="IPR017452">
    <property type="entry name" value="GPCR_Rhodpsn_7TM"/>
</dbReference>
<dbReference type="PANTHER" id="PTHR10489:SF957">
    <property type="entry name" value="B2 BRADYKININ RECEPTOR"/>
    <property type="match status" value="1"/>
</dbReference>
<dbReference type="PANTHER" id="PTHR10489">
    <property type="entry name" value="CELL ADHESION MOLECULE"/>
    <property type="match status" value="1"/>
</dbReference>
<dbReference type="Pfam" id="PF00001">
    <property type="entry name" value="7tm_1"/>
    <property type="match status" value="1"/>
</dbReference>
<dbReference type="PRINTS" id="PR00425">
    <property type="entry name" value="BRADYKININR"/>
</dbReference>
<dbReference type="PRINTS" id="PR00993">
    <property type="entry name" value="BRADYKINNB1R"/>
</dbReference>
<dbReference type="PRINTS" id="PR00237">
    <property type="entry name" value="GPCRRHODOPSN"/>
</dbReference>
<dbReference type="SUPFAM" id="SSF81321">
    <property type="entry name" value="Family A G protein-coupled receptor-like"/>
    <property type="match status" value="1"/>
</dbReference>
<dbReference type="PROSITE" id="PS50262">
    <property type="entry name" value="G_PROTEIN_RECEP_F1_2"/>
    <property type="match status" value="1"/>
</dbReference>
<keyword id="KW-1003">Cell membrane</keyword>
<keyword id="KW-1015">Disulfide bond</keyword>
<keyword id="KW-0297">G-protein coupled receptor</keyword>
<keyword id="KW-0325">Glycoprotein</keyword>
<keyword id="KW-0472">Membrane</keyword>
<keyword id="KW-0675">Receptor</keyword>
<keyword id="KW-1185">Reference proteome</keyword>
<keyword id="KW-0807">Transducer</keyword>
<keyword id="KW-0812">Transmembrane</keyword>
<keyword id="KW-1133">Transmembrane helix</keyword>
<organism>
    <name type="scientific">Rattus norvegicus</name>
    <name type="common">Rat</name>
    <dbReference type="NCBI Taxonomy" id="10116"/>
    <lineage>
        <taxon>Eukaryota</taxon>
        <taxon>Metazoa</taxon>
        <taxon>Chordata</taxon>
        <taxon>Craniata</taxon>
        <taxon>Vertebrata</taxon>
        <taxon>Euteleostomi</taxon>
        <taxon>Mammalia</taxon>
        <taxon>Eutheria</taxon>
        <taxon>Euarchontoglires</taxon>
        <taxon>Glires</taxon>
        <taxon>Rodentia</taxon>
        <taxon>Myomorpha</taxon>
        <taxon>Muroidea</taxon>
        <taxon>Muridae</taxon>
        <taxon>Murinae</taxon>
        <taxon>Rattus</taxon>
    </lineage>
</organism>
<accession>P97583</accession>
<accession>O35782</accession>
<accession>Q9R250</accession>
<name>BKRB1_RAT</name>
<proteinExistence type="evidence at transcript level"/>
<reference key="1">
    <citation type="journal article" date="1998" name="Biochim. Biophys. Acta">
        <title>Molecular cloning and expression of rat bradykinin B1 receptor.</title>
        <authorList>
            <person name="Ni A."/>
            <person name="Chai K.X."/>
            <person name="Chao L."/>
            <person name="Chao J."/>
        </authorList>
    </citation>
    <scope>NUCLEOTIDE SEQUENCE [MRNA]</scope>
    <scope>INDUCTION</scope>
    <source>
        <strain>Sprague-Dawley</strain>
    </source>
</reference>
<reference key="2">
    <citation type="journal article" date="1999" name="Eur. J. Pharmacol.">
        <title>Molecular characterisation of cloned bradykinin B1 receptors from rat and human.</title>
        <authorList>
            <person name="Jones C."/>
            <person name="Phillips E."/>
            <person name="Davis C."/>
            <person name="Arbuckle J."/>
            <person name="Yaqoob M."/>
            <person name="Burgess G.M."/>
            <person name="Docherty R.J."/>
            <person name="Webb M."/>
            <person name="Bevan S.J."/>
            <person name="McIntyre P."/>
        </authorList>
    </citation>
    <scope>NUCLEOTIDE SEQUENCE [MRNA]</scope>
    <scope>INDUCTION</scope>
    <source>
        <strain>Sprague-Dawley</strain>
        <tissue>Urinary bladder</tissue>
    </source>
</reference>
<reference key="3">
    <citation type="submission" date="1997-06" db="EMBL/GenBank/DDBJ databases">
        <title>Molecular cloning of a rat kinin B1 receptor gene.</title>
        <authorList>
            <person name="Oliveira S.M."/>
            <person name="Araujo R.C."/>
            <person name="Pesquero J.L."/>
            <person name="Bader M."/>
            <person name="Pesquero J.B."/>
        </authorList>
    </citation>
    <scope>NUCLEOTIDE SEQUENCE</scope>
    <source>
        <strain>Sprague-Dawley</strain>
    </source>
</reference>
<reference key="4">
    <citation type="submission" date="1998-12" db="EMBL/GenBank/DDBJ databases">
        <title>Rat bradykinin B1 gene, promoter region, exon 1, intron 1, and exon 2.</title>
        <authorList>
            <person name="Schanstra J.P."/>
            <person name="Girolami J.P."/>
            <person name="Bascands J.L."/>
        </authorList>
    </citation>
    <scope>NUCLEOTIDE SEQUENCE OF 1-15</scope>
    <source>
        <strain>Sprague-Dawley</strain>
    </source>
</reference>